<organism>
    <name type="scientific">Arabidopsis thaliana</name>
    <name type="common">Mouse-ear cress</name>
    <dbReference type="NCBI Taxonomy" id="3702"/>
    <lineage>
        <taxon>Eukaryota</taxon>
        <taxon>Viridiplantae</taxon>
        <taxon>Streptophyta</taxon>
        <taxon>Embryophyta</taxon>
        <taxon>Tracheophyta</taxon>
        <taxon>Spermatophyta</taxon>
        <taxon>Magnoliopsida</taxon>
        <taxon>eudicotyledons</taxon>
        <taxon>Gunneridae</taxon>
        <taxon>Pentapetalae</taxon>
        <taxon>rosids</taxon>
        <taxon>malvids</taxon>
        <taxon>Brassicales</taxon>
        <taxon>Brassicaceae</taxon>
        <taxon>Camelineae</taxon>
        <taxon>Arabidopsis</taxon>
    </lineage>
</organism>
<dbReference type="EMBL" id="AC008075">
    <property type="protein sequence ID" value="AAD49982.1"/>
    <property type="status" value="ALT_SEQ"/>
    <property type="molecule type" value="Genomic_DNA"/>
</dbReference>
<dbReference type="EMBL" id="CP002684">
    <property type="protein sequence ID" value="AEE34821.1"/>
    <property type="molecule type" value="Genomic_DNA"/>
</dbReference>
<dbReference type="EMBL" id="BX813386">
    <property type="status" value="NOT_ANNOTATED_CDS"/>
    <property type="molecule type" value="mRNA"/>
</dbReference>
<dbReference type="EMBL" id="BT031380">
    <property type="protein sequence ID" value="ACB88836.1"/>
    <property type="molecule type" value="mRNA"/>
</dbReference>
<dbReference type="PIR" id="G96710">
    <property type="entry name" value="G96710"/>
</dbReference>
<dbReference type="RefSeq" id="NP_177030.4">
    <property type="nucleotide sequence ID" value="NM_105535.4"/>
</dbReference>
<dbReference type="FunCoup" id="Q9SX26">
    <property type="interactions" value="39"/>
</dbReference>
<dbReference type="STRING" id="3702.Q9SX26"/>
<dbReference type="PaxDb" id="3702-AT1G68630.1"/>
<dbReference type="ProteomicsDB" id="236360"/>
<dbReference type="EnsemblPlants" id="AT1G68630.1">
    <property type="protein sequence ID" value="AT1G68630.1"/>
    <property type="gene ID" value="AT1G68630"/>
</dbReference>
<dbReference type="GeneID" id="843193"/>
<dbReference type="Gramene" id="AT1G68630.1">
    <property type="protein sequence ID" value="AT1G68630.1"/>
    <property type="gene ID" value="AT1G68630"/>
</dbReference>
<dbReference type="KEGG" id="ath:AT1G68630"/>
<dbReference type="Araport" id="AT1G68630"/>
<dbReference type="TAIR" id="AT1G68630"/>
<dbReference type="eggNOG" id="ENOG502S00T">
    <property type="taxonomic scope" value="Eukaryota"/>
</dbReference>
<dbReference type="HOGENOM" id="CLU_083147_1_2_1"/>
<dbReference type="InParanoid" id="Q9SX26"/>
<dbReference type="OMA" id="EEPCRDF"/>
<dbReference type="OrthoDB" id="1045822at2759"/>
<dbReference type="PRO" id="PR:Q9SX26"/>
<dbReference type="Proteomes" id="UP000006548">
    <property type="component" value="Chromosome 1"/>
</dbReference>
<dbReference type="ExpressionAtlas" id="Q9SX26">
    <property type="expression patterns" value="baseline and differential"/>
</dbReference>
<dbReference type="GO" id="GO:0016020">
    <property type="term" value="C:membrane"/>
    <property type="evidence" value="ECO:0007669"/>
    <property type="project" value="UniProtKB-SubCell"/>
</dbReference>
<dbReference type="InterPro" id="IPR006461">
    <property type="entry name" value="PLAC_motif_containing"/>
</dbReference>
<dbReference type="NCBIfam" id="TIGR01571">
    <property type="entry name" value="A_thal_Cys_rich"/>
    <property type="match status" value="1"/>
</dbReference>
<dbReference type="PANTHER" id="PTHR15907">
    <property type="entry name" value="DUF614 FAMILY PROTEIN-RELATED"/>
    <property type="match status" value="1"/>
</dbReference>
<dbReference type="Pfam" id="PF04749">
    <property type="entry name" value="PLAC8"/>
    <property type="match status" value="1"/>
</dbReference>
<reference key="1">
    <citation type="journal article" date="2000" name="Nature">
        <title>Sequence and analysis of chromosome 1 of the plant Arabidopsis thaliana.</title>
        <authorList>
            <person name="Theologis A."/>
            <person name="Ecker J.R."/>
            <person name="Palm C.J."/>
            <person name="Federspiel N.A."/>
            <person name="Kaul S."/>
            <person name="White O."/>
            <person name="Alonso J."/>
            <person name="Altafi H."/>
            <person name="Araujo R."/>
            <person name="Bowman C.L."/>
            <person name="Brooks S.Y."/>
            <person name="Buehler E."/>
            <person name="Chan A."/>
            <person name="Chao Q."/>
            <person name="Chen H."/>
            <person name="Cheuk R.F."/>
            <person name="Chin C.W."/>
            <person name="Chung M.K."/>
            <person name="Conn L."/>
            <person name="Conway A.B."/>
            <person name="Conway A.R."/>
            <person name="Creasy T.H."/>
            <person name="Dewar K."/>
            <person name="Dunn P."/>
            <person name="Etgu P."/>
            <person name="Feldblyum T.V."/>
            <person name="Feng J.-D."/>
            <person name="Fong B."/>
            <person name="Fujii C.Y."/>
            <person name="Gill J.E."/>
            <person name="Goldsmith A.D."/>
            <person name="Haas B."/>
            <person name="Hansen N.F."/>
            <person name="Hughes B."/>
            <person name="Huizar L."/>
            <person name="Hunter J.L."/>
            <person name="Jenkins J."/>
            <person name="Johnson-Hopson C."/>
            <person name="Khan S."/>
            <person name="Khaykin E."/>
            <person name="Kim C.J."/>
            <person name="Koo H.L."/>
            <person name="Kremenetskaia I."/>
            <person name="Kurtz D.B."/>
            <person name="Kwan A."/>
            <person name="Lam B."/>
            <person name="Langin-Hooper S."/>
            <person name="Lee A."/>
            <person name="Lee J.M."/>
            <person name="Lenz C.A."/>
            <person name="Li J.H."/>
            <person name="Li Y.-P."/>
            <person name="Lin X."/>
            <person name="Liu S.X."/>
            <person name="Liu Z.A."/>
            <person name="Luros J.S."/>
            <person name="Maiti R."/>
            <person name="Marziali A."/>
            <person name="Militscher J."/>
            <person name="Miranda M."/>
            <person name="Nguyen M."/>
            <person name="Nierman W.C."/>
            <person name="Osborne B.I."/>
            <person name="Pai G."/>
            <person name="Peterson J."/>
            <person name="Pham P.K."/>
            <person name="Rizzo M."/>
            <person name="Rooney T."/>
            <person name="Rowley D."/>
            <person name="Sakano H."/>
            <person name="Salzberg S.L."/>
            <person name="Schwartz J.R."/>
            <person name="Shinn P."/>
            <person name="Southwick A.M."/>
            <person name="Sun H."/>
            <person name="Tallon L.J."/>
            <person name="Tambunga G."/>
            <person name="Toriumi M.J."/>
            <person name="Town C.D."/>
            <person name="Utterback T."/>
            <person name="Van Aken S."/>
            <person name="Vaysberg M."/>
            <person name="Vysotskaia V.S."/>
            <person name="Walker M."/>
            <person name="Wu D."/>
            <person name="Yu G."/>
            <person name="Fraser C.M."/>
            <person name="Venter J.C."/>
            <person name="Davis R.W."/>
        </authorList>
    </citation>
    <scope>NUCLEOTIDE SEQUENCE [LARGE SCALE GENOMIC DNA]</scope>
    <source>
        <strain>cv. Columbia</strain>
    </source>
</reference>
<reference key="2">
    <citation type="journal article" date="2017" name="Plant J.">
        <title>Araport11: a complete reannotation of the Arabidopsis thaliana reference genome.</title>
        <authorList>
            <person name="Cheng C.Y."/>
            <person name="Krishnakumar V."/>
            <person name="Chan A.P."/>
            <person name="Thibaud-Nissen F."/>
            <person name="Schobel S."/>
            <person name="Town C.D."/>
        </authorList>
    </citation>
    <scope>GENOME REANNOTATION</scope>
    <source>
        <strain>cv. Columbia</strain>
    </source>
</reference>
<reference key="3">
    <citation type="journal article" date="2004" name="Genome Res.">
        <title>Whole genome sequence comparisons and 'full-length' cDNA sequences: a combined approach to evaluate and improve Arabidopsis genome annotation.</title>
        <authorList>
            <person name="Castelli V."/>
            <person name="Aury J.-M."/>
            <person name="Jaillon O."/>
            <person name="Wincker P."/>
            <person name="Clepet C."/>
            <person name="Menard M."/>
            <person name="Cruaud C."/>
            <person name="Quetier F."/>
            <person name="Scarpelli C."/>
            <person name="Schaechter V."/>
            <person name="Temple G."/>
            <person name="Caboche M."/>
            <person name="Weissenbach J."/>
            <person name="Salanoubat M."/>
        </authorList>
    </citation>
    <scope>NUCLEOTIDE SEQUENCE [LARGE SCALE MRNA]</scope>
    <source>
        <strain>cv. Columbia</strain>
    </source>
</reference>
<reference key="4">
    <citation type="submission" date="2008-04" db="EMBL/GenBank/DDBJ databases">
        <title>Arabidopsis ORF clones.</title>
        <authorList>
            <person name="de los Reyes C."/>
            <person name="Quan R."/>
            <person name="Chen H."/>
            <person name="Bautista V."/>
            <person name="Kim C.J."/>
            <person name="Ecker J.R."/>
        </authorList>
    </citation>
    <scope>NUCLEOTIDE SEQUENCE [LARGE SCALE MRNA] OF 69-161</scope>
    <source>
        <strain>cv. Columbia</strain>
    </source>
</reference>
<reference key="5">
    <citation type="journal article" date="2010" name="Plant Cell">
        <title>Arabidopsis PCR2 is a zinc exporter involved in both zinc extrusion and long-distance zinc transport.</title>
        <authorList>
            <person name="Song W.Y."/>
            <person name="Choi K.S."/>
            <person name="Kim do Y."/>
            <person name="Geisler M."/>
            <person name="Park J."/>
            <person name="Vincenzetti V."/>
            <person name="Schellenberg M."/>
            <person name="Kim S.H."/>
            <person name="Lim Y.P."/>
            <person name="Noh E.W."/>
            <person name="Lee Y."/>
            <person name="Martinoia E."/>
        </authorList>
    </citation>
    <scope>GENE FAMILY</scope>
    <scope>NOMENCLATURE</scope>
</reference>
<sequence length="161" mass="18037">MYGNGPVFKAEGTSFRDQPYAEQLPQGLWTTGLCDCHEDAHICVQTAIMPCVSFAQNVEIVNRGTIPCMNAGLIHLALGFIGCSWLYAFPNRSRLREHFALPEEPCRDFLVHLFCTPCAICQESRELKNRGADPSIGWLSNVEKWSREKVTPPIVVPGMIR</sequence>
<name>PCR12_ARATH</name>
<keyword id="KW-0472">Membrane</keyword>
<keyword id="KW-1185">Reference proteome</keyword>
<keyword id="KW-0812">Transmembrane</keyword>
<keyword id="KW-1133">Transmembrane helix</keyword>
<evidence type="ECO:0000250" key="1"/>
<evidence type="ECO:0000255" key="2"/>
<evidence type="ECO:0000305" key="3"/>
<protein>
    <recommendedName>
        <fullName>Protein PLANT CADMIUM RESISTANCE 12</fullName>
        <shortName>AtPCR12</shortName>
    </recommendedName>
</protein>
<feature type="chain" id="PRO_0000407728" description="Protein PLANT CADMIUM RESISTANCE 12">
    <location>
        <begin position="1"/>
        <end position="161"/>
    </location>
</feature>
<feature type="transmembrane region" description="Helical" evidence="2">
    <location>
        <begin position="71"/>
        <end position="89"/>
    </location>
</feature>
<feature type="sequence conflict" description="In Ref. 3; BX813386." evidence="3" ref="3">
    <original>F</original>
    <variation>L</variation>
    <location>
        <position position="80"/>
    </location>
</feature>
<accession>Q9SX26</accession>
<accession>B2GVN4</accession>
<proteinExistence type="evidence at transcript level"/>
<gene>
    <name type="primary">PCR12</name>
    <name type="ordered locus">At1g68630</name>
    <name type="ORF">F24J5.13</name>
</gene>
<comment type="function">
    <text evidence="1">May be involved in heavy metals transport.</text>
</comment>
<comment type="subcellular location">
    <subcellularLocation>
        <location evidence="3">Membrane</location>
        <topology evidence="3">Single-pass membrane protein</topology>
    </subcellularLocation>
</comment>
<comment type="similarity">
    <text evidence="3">Belongs to the cornifelin family.</text>
</comment>
<comment type="sequence caution" evidence="3">
    <conflict type="erroneous gene model prediction">
        <sequence resource="EMBL-CDS" id="AAD49982"/>
    </conflict>
</comment>